<dbReference type="EMBL" id="M93639">
    <property type="protein sequence ID" value="AAA30930.1"/>
    <property type="molecule type" value="mRNA"/>
</dbReference>
<dbReference type="PIR" id="A46158">
    <property type="entry name" value="A46158"/>
</dbReference>
<dbReference type="SMR" id="P54251"/>
<dbReference type="GlyCosmos" id="P54251">
    <property type="glycosylation" value="2 sites, No reported glycans"/>
</dbReference>
<dbReference type="GO" id="GO:0045211">
    <property type="term" value="C:postsynaptic membrane"/>
    <property type="evidence" value="ECO:0007669"/>
    <property type="project" value="UniProtKB-SubCell"/>
</dbReference>
<dbReference type="GO" id="GO:0005230">
    <property type="term" value="F:extracellular ligand-gated monoatomic ion channel activity"/>
    <property type="evidence" value="ECO:0007669"/>
    <property type="project" value="InterPro"/>
</dbReference>
<dbReference type="GO" id="GO:0004888">
    <property type="term" value="F:transmembrane signaling receptor activity"/>
    <property type="evidence" value="ECO:0007669"/>
    <property type="project" value="InterPro"/>
</dbReference>
<dbReference type="FunFam" id="2.70.170.10:FF:000119">
    <property type="entry name" value="Acetylcholine receptor subunit alpha"/>
    <property type="match status" value="1"/>
</dbReference>
<dbReference type="Gene3D" id="2.70.170.10">
    <property type="entry name" value="Neurotransmitter-gated ion-channel ligand-binding domain"/>
    <property type="match status" value="1"/>
</dbReference>
<dbReference type="InterPro" id="IPR006202">
    <property type="entry name" value="Neur_chan_lig-bd"/>
</dbReference>
<dbReference type="InterPro" id="IPR036734">
    <property type="entry name" value="Neur_chan_lig-bd_sf"/>
</dbReference>
<dbReference type="InterPro" id="IPR006201">
    <property type="entry name" value="Neur_channel"/>
</dbReference>
<dbReference type="InterPro" id="IPR018000">
    <property type="entry name" value="Neurotransmitter_ion_chnl_CS"/>
</dbReference>
<dbReference type="PANTHER" id="PTHR18945">
    <property type="entry name" value="NEUROTRANSMITTER GATED ION CHANNEL"/>
    <property type="match status" value="1"/>
</dbReference>
<dbReference type="Pfam" id="PF02931">
    <property type="entry name" value="Neur_chan_LBD"/>
    <property type="match status" value="1"/>
</dbReference>
<dbReference type="SUPFAM" id="SSF63712">
    <property type="entry name" value="Nicotinic receptor ligand binding domain-like"/>
    <property type="match status" value="1"/>
</dbReference>
<dbReference type="PROSITE" id="PS00236">
    <property type="entry name" value="NEUROTR_ION_CHANNEL"/>
    <property type="match status" value="1"/>
</dbReference>
<keyword id="KW-1003">Cell membrane</keyword>
<keyword id="KW-1015">Disulfide bond</keyword>
<keyword id="KW-0325">Glycoprotein</keyword>
<keyword id="KW-0407">Ion channel</keyword>
<keyword id="KW-0406">Ion transport</keyword>
<keyword id="KW-1071">Ligand-gated ion channel</keyword>
<keyword id="KW-0472">Membrane</keyword>
<keyword id="KW-0628">Postsynaptic cell membrane</keyword>
<keyword id="KW-0675">Receptor</keyword>
<keyword id="KW-0770">Synapse</keyword>
<keyword id="KW-0812">Transmembrane</keyword>
<keyword id="KW-0813">Transport</keyword>
<evidence type="ECO:0000250" key="1"/>
<evidence type="ECO:0000250" key="2">
    <source>
        <dbReference type="UniProtKB" id="P02708"/>
    </source>
</evidence>
<evidence type="ECO:0000250" key="3">
    <source>
        <dbReference type="UniProtKB" id="P02709"/>
    </source>
</evidence>
<evidence type="ECO:0000255" key="4"/>
<evidence type="ECO:0000305" key="5"/>
<sequence length="84" mass="9803">AIFKSYCEIIVTHFPFDEQNCSMKLGTWTYDSSVVVINPESDQPDLSNFMESGEWVIKEARGWKHNVTYACCLTTHYLDITYHF</sequence>
<feature type="chain" id="PRO_0000076973" description="Acetylcholine receptor subunit alpha">
    <location>
        <begin position="1" status="less than"/>
        <end position="84" status="greater than"/>
    </location>
</feature>
<feature type="site" description="Confers toxin resistance" evidence="4">
    <location>
        <position position="66"/>
    </location>
</feature>
<feature type="site" description="Confers toxin resistance" evidence="4">
    <location>
        <position position="68"/>
    </location>
</feature>
<feature type="site" description="Confers toxin resistance" evidence="4">
    <location>
        <position position="73"/>
    </location>
</feature>
<feature type="glycosylation site" description="N-linked (GlcNAc...) asparagine" evidence="4">
    <location>
        <position position="20"/>
    </location>
</feature>
<feature type="glycosylation site" description="N-linked (GlcNAc...) asparagine" evidence="5">
    <location>
        <position position="66"/>
    </location>
</feature>
<feature type="disulfide bond" evidence="1">
    <location>
        <begin position="7"/>
        <end position="21"/>
    </location>
</feature>
<feature type="disulfide bond" description="Associated with receptor activation" evidence="1">
    <location>
        <begin position="71"/>
        <end position="72"/>
    </location>
</feature>
<feature type="non-terminal residue">
    <location>
        <position position="1"/>
    </location>
</feature>
<feature type="non-terminal residue">
    <location>
        <position position="84"/>
    </location>
</feature>
<accession>P54251</accession>
<organism>
    <name type="scientific">Herpestes ichneumon</name>
    <name type="common">Egyptian mongoose</name>
    <dbReference type="NCBI Taxonomy" id="9700"/>
    <lineage>
        <taxon>Eukaryota</taxon>
        <taxon>Metazoa</taxon>
        <taxon>Chordata</taxon>
        <taxon>Craniata</taxon>
        <taxon>Vertebrata</taxon>
        <taxon>Euteleostomi</taxon>
        <taxon>Mammalia</taxon>
        <taxon>Eutheria</taxon>
        <taxon>Laurasiatheria</taxon>
        <taxon>Carnivora</taxon>
        <taxon>Feliformia</taxon>
        <taxon>Herpestidae</taxon>
        <taxon>Herpestes</taxon>
    </lineage>
</organism>
<reference key="1">
    <citation type="journal article" date="1992" name="Proc. Natl. Acad. Sci. U.S.A.">
        <title>How the mongoose can fight the snake: the binding site of the mongoose acetylcholine receptor.</title>
        <authorList>
            <person name="Barchan D."/>
            <person name="Kachalsky S."/>
            <person name="Neumann D."/>
            <person name="Vogel Z."/>
            <person name="Ovadia M."/>
            <person name="Kochva E."/>
            <person name="Fuchs S."/>
        </authorList>
    </citation>
    <scope>NUCLEOTIDE SEQUENCE [MRNA]</scope>
    <source>
        <tissue>Muscle</tissue>
    </source>
</reference>
<protein>
    <recommendedName>
        <fullName>Acetylcholine receptor subunit alpha</fullName>
    </recommendedName>
</protein>
<name>ACHA_HERIC</name>
<comment type="function">
    <text evidence="2">Upon acetylcholine binding, the AChR responds by an extensive change in conformation that affects all subunits and leads to opening of an ion-conducting channel across the plasma membrane.</text>
</comment>
<comment type="catalytic activity">
    <reaction evidence="3">
        <text>K(+)(in) = K(+)(out)</text>
        <dbReference type="Rhea" id="RHEA:29463"/>
        <dbReference type="ChEBI" id="CHEBI:29103"/>
    </reaction>
</comment>
<comment type="catalytic activity">
    <reaction evidence="3">
        <text>Na(+)(in) = Na(+)(out)</text>
        <dbReference type="Rhea" id="RHEA:34963"/>
        <dbReference type="ChEBI" id="CHEBI:29101"/>
    </reaction>
</comment>
<comment type="subunit">
    <text evidence="2">One of the alpha chains that assemble within the acetylcholine receptor, a pentamer of two alpha chains, a beta, a delta, and a gamma (in immature muscle) or epsilon (in mature muscle) chains. The muscle heteropentamer composed of alpha-1, beta-1, delta, epsilon subunits interacts with the alpha-conotoxin ImII.</text>
</comment>
<comment type="subcellular location">
    <subcellularLocation>
        <location evidence="2">Postsynaptic cell membrane</location>
        <topology evidence="4">Multi-pass membrane protein</topology>
    </subcellularLocation>
    <subcellularLocation>
        <location evidence="2">Cell membrane</location>
        <topology evidence="4">Multi-pass membrane protein</topology>
    </subcellularLocation>
</comment>
<comment type="similarity">
    <text evidence="5">Belongs to the ligand-gated ion channel (TC 1.A.9) family. Acetylcholine receptor (TC 1.A.9.1) subfamily. Alpha-1/CHRNA1 sub-subfamily.</text>
</comment>
<gene>
    <name type="primary">CHRNA1</name>
</gene>
<proteinExistence type="evidence at transcript level"/>